<proteinExistence type="inferred from homology"/>
<comment type="function">
    <text evidence="1">Catalyzes the attachment of alanine to tRNA(Ala) in a two-step reaction: alanine is first activated by ATP to form Ala-AMP and then transferred to the acceptor end of tRNA(Ala). Also edits incorrectly charged Ser-tRNA(Ala) and Gly-tRNA(Ala) via its editing domain (By similarity).</text>
</comment>
<comment type="catalytic activity">
    <reaction>
        <text>tRNA(Ala) + L-alanine + ATP = L-alanyl-tRNA(Ala) + AMP + diphosphate</text>
        <dbReference type="Rhea" id="RHEA:12540"/>
        <dbReference type="Rhea" id="RHEA-COMP:9657"/>
        <dbReference type="Rhea" id="RHEA-COMP:9923"/>
        <dbReference type="ChEBI" id="CHEBI:30616"/>
        <dbReference type="ChEBI" id="CHEBI:33019"/>
        <dbReference type="ChEBI" id="CHEBI:57972"/>
        <dbReference type="ChEBI" id="CHEBI:78442"/>
        <dbReference type="ChEBI" id="CHEBI:78497"/>
        <dbReference type="ChEBI" id="CHEBI:456215"/>
        <dbReference type="EC" id="6.1.1.7"/>
    </reaction>
</comment>
<comment type="subcellular location">
    <subcellularLocation>
        <location evidence="1">Cytoplasm</location>
    </subcellularLocation>
</comment>
<comment type="domain">
    <text evidence="1">Consists of three domains; the N-terminal catalytic domain, the editing domain and the C-terminal C-Ala domain. The editing domain removes incorrectly charged amino acids, while the C-Ala domain, along with tRNA(Ala), serves as a bridge to cooperatively bring together the editing and aminoacylation centers thus stimulating deacylation of misacylated tRNAs (By similarity).</text>
</comment>
<comment type="similarity">
    <text evidence="2">Belongs to the class-II aminoacyl-tRNA synthetase family.</text>
</comment>
<sequence>MKKLSSSEIRQMYLDFFHEKGHTIVPSASLVPVDDPTLLWINSGVATMKKYFDGSVVPDNPRMTSSQKSIRTNDIENVGRTARHHTLFEMLGNFSVGDYFKKEAISWAWELLTSPKWFGWDPDKLYMTVYPKDTDAAKFWEATGVKPDHIIKVEDNFWDIGQGPSGPDSEIFYDRGEAFNNLADDDPENYPGGENERYLEVWNIVFSQFNHTPEGTYEPLPRKNIDTGMGLERVVSVFQNAKTNFETDLFLPIIHKTEELSDGKHYGDNAQDDVSFKVIADHARAITFAISDGALPSNEGRGYVIRRLIRRAILHGQKLGLKEAFLDQLVPIVGKIMASHYPDVLKNSAYIEKIVASEESRFNETLNDGLNLLNNLIAETKQTGHDTLAGKDAFKLYDTYGFPFELTKEYAGDEDLDVDEAGFEVEMKAQRDRARNARSSAKSMGVQRSLLIDIKTPSEYVGYDELTNVQGTLNDIIVDETLVDHVDSGQAEMIFSKTPFYAEMGGQVADRGVILDDAGEMVAKVTDVQNAPNKQHLHTVEVLKPMRKDATYTLNVDLAFHNKVEKNHTATHLLDQALRDVLGEHTKQAGSLVEPDYLRFDFTHFGQVTDEELAKVEQIVNDKIWAALPVSAIQTDQETGHKMGAIAVFTEKYGKIVRVVSIGDYSIEFDGGTHVKNSSELGLFKIVSETGIGAGTRRIEAVTSKEAFELLAGEEQTLKQVAAQVKAPKLADTPAKVSQLQADLKAEQQNRASLESRLAKQQAGAVFDQVDDVNGTTLIAQQIEVSGMDQLRQLADTWKTKQYSDVLVLGTVIGEKVNLLVAVSDDKVKAGIKAGDLIKAIAPKVGGGGGGRPTLAQAGGKKPAGLPVALKAAHEWLAEQ</sequence>
<keyword id="KW-0030">Aminoacyl-tRNA synthetase</keyword>
<keyword id="KW-0067">ATP-binding</keyword>
<keyword id="KW-0963">Cytoplasm</keyword>
<keyword id="KW-0436">Ligase</keyword>
<keyword id="KW-0547">Nucleotide-binding</keyword>
<keyword id="KW-0648">Protein biosynthesis</keyword>
<keyword id="KW-1185">Reference proteome</keyword>
<keyword id="KW-0694">RNA-binding</keyword>
<keyword id="KW-0820">tRNA-binding</keyword>
<evidence type="ECO:0000250" key="1"/>
<evidence type="ECO:0000305" key="2"/>
<protein>
    <recommendedName>
        <fullName>Alanine--tRNA ligase</fullName>
        <ecNumber>6.1.1.7</ecNumber>
    </recommendedName>
    <alternativeName>
        <fullName>Alanyl-tRNA synthetase</fullName>
        <shortName>AlaRS</shortName>
    </alternativeName>
</protein>
<accession>Q88V10</accession>
<accession>F9UQJ6</accession>
<name>SYA_LACPL</name>
<gene>
    <name type="primary">alaS</name>
    <name type="ordered locus">lp_2277</name>
</gene>
<dbReference type="EC" id="6.1.1.7"/>
<dbReference type="EMBL" id="AL935263">
    <property type="protein sequence ID" value="CCC79485.1"/>
    <property type="molecule type" value="Genomic_DNA"/>
</dbReference>
<dbReference type="RefSeq" id="WP_011101703.1">
    <property type="nucleotide sequence ID" value="NC_004567.2"/>
</dbReference>
<dbReference type="RefSeq" id="YP_004889999.1">
    <property type="nucleotide sequence ID" value="NC_004567.2"/>
</dbReference>
<dbReference type="SMR" id="Q88V10"/>
<dbReference type="STRING" id="220668.lp_2277"/>
<dbReference type="EnsemblBacteria" id="CCC79485">
    <property type="protein sequence ID" value="CCC79485"/>
    <property type="gene ID" value="lp_2277"/>
</dbReference>
<dbReference type="KEGG" id="lpl:lp_2277"/>
<dbReference type="PATRIC" id="fig|220668.9.peg.1927"/>
<dbReference type="eggNOG" id="COG0013">
    <property type="taxonomic scope" value="Bacteria"/>
</dbReference>
<dbReference type="HOGENOM" id="CLU_004485_1_1_9"/>
<dbReference type="OrthoDB" id="9803884at2"/>
<dbReference type="PhylomeDB" id="Q88V10"/>
<dbReference type="Proteomes" id="UP000000432">
    <property type="component" value="Chromosome"/>
</dbReference>
<dbReference type="GO" id="GO:0005829">
    <property type="term" value="C:cytosol"/>
    <property type="evidence" value="ECO:0007669"/>
    <property type="project" value="TreeGrafter"/>
</dbReference>
<dbReference type="GO" id="GO:0004813">
    <property type="term" value="F:alanine-tRNA ligase activity"/>
    <property type="evidence" value="ECO:0007669"/>
    <property type="project" value="UniProtKB-UniRule"/>
</dbReference>
<dbReference type="GO" id="GO:0002161">
    <property type="term" value="F:aminoacyl-tRNA deacylase activity"/>
    <property type="evidence" value="ECO:0007669"/>
    <property type="project" value="TreeGrafter"/>
</dbReference>
<dbReference type="GO" id="GO:0005524">
    <property type="term" value="F:ATP binding"/>
    <property type="evidence" value="ECO:0007669"/>
    <property type="project" value="UniProtKB-UniRule"/>
</dbReference>
<dbReference type="GO" id="GO:0140096">
    <property type="term" value="F:catalytic activity, acting on a protein"/>
    <property type="evidence" value="ECO:0007669"/>
    <property type="project" value="UniProtKB-ARBA"/>
</dbReference>
<dbReference type="GO" id="GO:0016740">
    <property type="term" value="F:transferase activity"/>
    <property type="evidence" value="ECO:0007669"/>
    <property type="project" value="UniProtKB-ARBA"/>
</dbReference>
<dbReference type="GO" id="GO:0000049">
    <property type="term" value="F:tRNA binding"/>
    <property type="evidence" value="ECO:0007669"/>
    <property type="project" value="UniProtKB-KW"/>
</dbReference>
<dbReference type="GO" id="GO:0006419">
    <property type="term" value="P:alanyl-tRNA aminoacylation"/>
    <property type="evidence" value="ECO:0007669"/>
    <property type="project" value="UniProtKB-UniRule"/>
</dbReference>
<dbReference type="CDD" id="cd00673">
    <property type="entry name" value="AlaRS_core"/>
    <property type="match status" value="1"/>
</dbReference>
<dbReference type="FunFam" id="3.10.310.40:FF:000001">
    <property type="entry name" value="Alanine--tRNA ligase"/>
    <property type="match status" value="1"/>
</dbReference>
<dbReference type="FunFam" id="3.30.930.10:FF:000046">
    <property type="entry name" value="Alanine--tRNA ligase"/>
    <property type="match status" value="1"/>
</dbReference>
<dbReference type="FunFam" id="3.30.980.10:FF:000004">
    <property type="entry name" value="Alanine--tRNA ligase, cytoplasmic"/>
    <property type="match status" value="1"/>
</dbReference>
<dbReference type="Gene3D" id="2.40.30.130">
    <property type="match status" value="1"/>
</dbReference>
<dbReference type="Gene3D" id="3.10.310.40">
    <property type="match status" value="1"/>
</dbReference>
<dbReference type="Gene3D" id="3.30.54.20">
    <property type="match status" value="1"/>
</dbReference>
<dbReference type="Gene3D" id="3.30.930.10">
    <property type="entry name" value="Bira Bifunctional Protein, Domain 2"/>
    <property type="match status" value="1"/>
</dbReference>
<dbReference type="Gene3D" id="3.30.980.10">
    <property type="entry name" value="Threonyl-trna Synthetase, Chain A, domain 2"/>
    <property type="match status" value="1"/>
</dbReference>
<dbReference type="HAMAP" id="MF_00036_B">
    <property type="entry name" value="Ala_tRNA_synth_B"/>
    <property type="match status" value="1"/>
</dbReference>
<dbReference type="InterPro" id="IPR045864">
    <property type="entry name" value="aa-tRNA-synth_II/BPL/LPL"/>
</dbReference>
<dbReference type="InterPro" id="IPR002318">
    <property type="entry name" value="Ala-tRNA-lgiase_IIc"/>
</dbReference>
<dbReference type="InterPro" id="IPR018162">
    <property type="entry name" value="Ala-tRNA-ligase_IIc_anticod-bd"/>
</dbReference>
<dbReference type="InterPro" id="IPR018165">
    <property type="entry name" value="Ala-tRNA-synth_IIc_core"/>
</dbReference>
<dbReference type="InterPro" id="IPR018164">
    <property type="entry name" value="Ala-tRNA-synth_IIc_N"/>
</dbReference>
<dbReference type="InterPro" id="IPR050058">
    <property type="entry name" value="Ala-tRNA_ligase"/>
</dbReference>
<dbReference type="InterPro" id="IPR023033">
    <property type="entry name" value="Ala_tRNA_ligase_euk/bac"/>
</dbReference>
<dbReference type="InterPro" id="IPR003156">
    <property type="entry name" value="DHHA1_dom"/>
</dbReference>
<dbReference type="InterPro" id="IPR018163">
    <property type="entry name" value="Thr/Ala-tRNA-synth_IIc_edit"/>
</dbReference>
<dbReference type="InterPro" id="IPR009000">
    <property type="entry name" value="Transl_B-barrel_sf"/>
</dbReference>
<dbReference type="InterPro" id="IPR012947">
    <property type="entry name" value="tRNA_SAD"/>
</dbReference>
<dbReference type="NCBIfam" id="TIGR00344">
    <property type="entry name" value="alaS"/>
    <property type="match status" value="1"/>
</dbReference>
<dbReference type="PANTHER" id="PTHR11777:SF9">
    <property type="entry name" value="ALANINE--TRNA LIGASE, CYTOPLASMIC"/>
    <property type="match status" value="1"/>
</dbReference>
<dbReference type="PANTHER" id="PTHR11777">
    <property type="entry name" value="ALANYL-TRNA SYNTHETASE"/>
    <property type="match status" value="1"/>
</dbReference>
<dbReference type="Pfam" id="PF02272">
    <property type="entry name" value="DHHA1"/>
    <property type="match status" value="1"/>
</dbReference>
<dbReference type="Pfam" id="PF01411">
    <property type="entry name" value="tRNA-synt_2c"/>
    <property type="match status" value="1"/>
</dbReference>
<dbReference type="Pfam" id="PF07973">
    <property type="entry name" value="tRNA_SAD"/>
    <property type="match status" value="1"/>
</dbReference>
<dbReference type="PRINTS" id="PR00980">
    <property type="entry name" value="TRNASYNTHALA"/>
</dbReference>
<dbReference type="SMART" id="SM00863">
    <property type="entry name" value="tRNA_SAD"/>
    <property type="match status" value="1"/>
</dbReference>
<dbReference type="SUPFAM" id="SSF55681">
    <property type="entry name" value="Class II aaRS and biotin synthetases"/>
    <property type="match status" value="1"/>
</dbReference>
<dbReference type="SUPFAM" id="SSF101353">
    <property type="entry name" value="Putative anticodon-binding domain of alanyl-tRNA synthetase (AlaRS)"/>
    <property type="match status" value="1"/>
</dbReference>
<dbReference type="SUPFAM" id="SSF55186">
    <property type="entry name" value="ThrRS/AlaRS common domain"/>
    <property type="match status" value="1"/>
</dbReference>
<dbReference type="SUPFAM" id="SSF50447">
    <property type="entry name" value="Translation proteins"/>
    <property type="match status" value="1"/>
</dbReference>
<dbReference type="PROSITE" id="PS50860">
    <property type="entry name" value="AA_TRNA_LIGASE_II_ALA"/>
    <property type="match status" value="1"/>
</dbReference>
<organism>
    <name type="scientific">Lactiplantibacillus plantarum (strain ATCC BAA-793 / NCIMB 8826 / WCFS1)</name>
    <name type="common">Lactobacillus plantarum</name>
    <dbReference type="NCBI Taxonomy" id="220668"/>
    <lineage>
        <taxon>Bacteria</taxon>
        <taxon>Bacillati</taxon>
        <taxon>Bacillota</taxon>
        <taxon>Bacilli</taxon>
        <taxon>Lactobacillales</taxon>
        <taxon>Lactobacillaceae</taxon>
        <taxon>Lactiplantibacillus</taxon>
    </lineage>
</organism>
<feature type="chain" id="PRO_0000075130" description="Alanine--tRNA ligase">
    <location>
        <begin position="1"/>
        <end position="880"/>
    </location>
</feature>
<reference key="1">
    <citation type="journal article" date="2003" name="Proc. Natl. Acad. Sci. U.S.A.">
        <title>Complete genome sequence of Lactobacillus plantarum WCFS1.</title>
        <authorList>
            <person name="Kleerebezem M."/>
            <person name="Boekhorst J."/>
            <person name="van Kranenburg R."/>
            <person name="Molenaar D."/>
            <person name="Kuipers O.P."/>
            <person name="Leer R."/>
            <person name="Tarchini R."/>
            <person name="Peters S.A."/>
            <person name="Sandbrink H.M."/>
            <person name="Fiers M.W.E.J."/>
            <person name="Stiekema W."/>
            <person name="Klein Lankhorst R.M."/>
            <person name="Bron P.A."/>
            <person name="Hoffer S.M."/>
            <person name="Nierop Groot M.N."/>
            <person name="Kerkhoven R."/>
            <person name="De Vries M."/>
            <person name="Ursing B."/>
            <person name="De Vos W.M."/>
            <person name="Siezen R.J."/>
        </authorList>
    </citation>
    <scope>NUCLEOTIDE SEQUENCE [LARGE SCALE GENOMIC DNA]</scope>
    <source>
        <strain>ATCC BAA-793 / NCIMB 8826 / WCFS1</strain>
    </source>
</reference>
<reference key="2">
    <citation type="journal article" date="2012" name="J. Bacteriol.">
        <title>Complete resequencing and reannotation of the Lactobacillus plantarum WCFS1 genome.</title>
        <authorList>
            <person name="Siezen R.J."/>
            <person name="Francke C."/>
            <person name="Renckens B."/>
            <person name="Boekhorst J."/>
            <person name="Wels M."/>
            <person name="Kleerebezem M."/>
            <person name="van Hijum S.A."/>
        </authorList>
    </citation>
    <scope>NUCLEOTIDE SEQUENCE [LARGE SCALE GENOMIC DNA]</scope>
    <scope>GENOME REANNOTATION</scope>
    <source>
        <strain>ATCC BAA-793 / NCIMB 8826 / WCFS1</strain>
    </source>
</reference>